<protein>
    <recommendedName>
        <fullName>Ig kappa chain V-V region MOPC 149</fullName>
    </recommendedName>
</protein>
<feature type="chain" id="PRO_0000059797" description="Ig kappa chain V-V region MOPC 149">
    <location>
        <begin position="1"/>
        <end position="108" status="greater than"/>
    </location>
</feature>
<feature type="region of interest" description="Framework-1">
    <location>
        <begin position="1"/>
        <end position="23"/>
    </location>
</feature>
<feature type="region of interest" description="Complementarity-determining-1">
    <location>
        <begin position="24"/>
        <end position="34"/>
    </location>
</feature>
<feature type="region of interest" description="Framework-2">
    <location>
        <begin position="35"/>
        <end position="49"/>
    </location>
</feature>
<feature type="region of interest" description="Complementarity-determining-2">
    <location>
        <begin position="50"/>
        <end position="56"/>
    </location>
</feature>
<feature type="region of interest" description="Framework-3">
    <location>
        <begin position="57"/>
        <end position="88"/>
    </location>
</feature>
<feature type="region of interest" description="Complementarity-determining-3">
    <location>
        <begin position="89"/>
        <end position="97"/>
    </location>
</feature>
<feature type="region of interest" description="Framework-4">
    <location>
        <begin position="98"/>
        <end position="108"/>
    </location>
</feature>
<feature type="disulfide bond" evidence="1">
    <location>
        <begin position="23"/>
        <end position="88"/>
    </location>
</feature>
<feature type="non-terminal residue">
    <location>
        <position position="108"/>
    </location>
</feature>
<feature type="strand" evidence="2">
    <location>
        <begin position="4"/>
        <end position="7"/>
    </location>
</feature>
<feature type="strand" evidence="2">
    <location>
        <begin position="9"/>
        <end position="13"/>
    </location>
</feature>
<feature type="strand" evidence="2">
    <location>
        <begin position="19"/>
        <end position="27"/>
    </location>
</feature>
<feature type="strand" evidence="2">
    <location>
        <begin position="33"/>
        <end position="38"/>
    </location>
</feature>
<feature type="strand" evidence="2">
    <location>
        <begin position="45"/>
        <end position="49"/>
    </location>
</feature>
<feature type="turn" evidence="2">
    <location>
        <begin position="50"/>
        <end position="52"/>
    </location>
</feature>
<feature type="strand" evidence="2">
    <location>
        <begin position="62"/>
        <end position="67"/>
    </location>
</feature>
<feature type="strand" evidence="2">
    <location>
        <begin position="70"/>
        <end position="77"/>
    </location>
</feature>
<feature type="helix" evidence="2">
    <location>
        <begin position="80"/>
        <end position="82"/>
    </location>
</feature>
<feature type="strand" evidence="2">
    <location>
        <begin position="84"/>
        <end position="90"/>
    </location>
</feature>
<feature type="strand" evidence="2">
    <location>
        <begin position="92"/>
        <end position="95"/>
    </location>
</feature>
<feature type="strand" evidence="2">
    <location>
        <begin position="102"/>
        <end position="106"/>
    </location>
</feature>
<organism>
    <name type="scientific">Mus musculus</name>
    <name type="common">Mouse</name>
    <dbReference type="NCBI Taxonomy" id="10090"/>
    <lineage>
        <taxon>Eukaryota</taxon>
        <taxon>Metazoa</taxon>
        <taxon>Chordata</taxon>
        <taxon>Craniata</taxon>
        <taxon>Vertebrata</taxon>
        <taxon>Euteleostomi</taxon>
        <taxon>Mammalia</taxon>
        <taxon>Eutheria</taxon>
        <taxon>Euarchontoglires</taxon>
        <taxon>Glires</taxon>
        <taxon>Rodentia</taxon>
        <taxon>Myomorpha</taxon>
        <taxon>Muroidea</taxon>
        <taxon>Muridae</taxon>
        <taxon>Murinae</taxon>
        <taxon>Mus</taxon>
        <taxon>Mus</taxon>
    </lineage>
</organism>
<proteinExistence type="evidence at protein level"/>
<sequence length="108" mass="12030">DIQMTQSPDYLSASVGETVTITCRASENIYSYLAWYQQKQGKSPQLLVYDAKTLVEGVPSRFSGSGSGTQFSLKINSLQPEDFGSYYCQHHYGIPFTFGSGTKLEIKR</sequence>
<accession>P01636</accession>
<keyword id="KW-0002">3D-structure</keyword>
<keyword id="KW-1064">Adaptive immunity</keyword>
<keyword id="KW-0903">Direct protein sequencing</keyword>
<keyword id="KW-1015">Disulfide bond</keyword>
<keyword id="KW-0391">Immunity</keyword>
<keyword id="KW-1280">Immunoglobulin</keyword>
<keyword id="KW-1185">Reference proteome</keyword>
<comment type="miscellaneous">
    <text>This chain was isolated from a myeloma protein.</text>
</comment>
<dbReference type="PIR" id="A01919">
    <property type="entry name" value="KVMS49"/>
</dbReference>
<dbReference type="PIR" id="B47329">
    <property type="entry name" value="B47329"/>
</dbReference>
<dbReference type="PDB" id="1AR1">
    <property type="method" value="X-ray"/>
    <property type="resolution" value="2.70 A"/>
    <property type="chains" value="C=-"/>
</dbReference>
<dbReference type="PDB" id="1MQK">
    <property type="method" value="X-ray"/>
    <property type="resolution" value="1.28 A"/>
    <property type="chains" value="L=8-108"/>
</dbReference>
<dbReference type="PDB" id="3EHB">
    <property type="method" value="X-ray"/>
    <property type="resolution" value="2.32 A"/>
    <property type="chains" value="D=8-108"/>
</dbReference>
<dbReference type="PDB" id="3HB3">
    <property type="method" value="X-ray"/>
    <property type="resolution" value="2.25 A"/>
    <property type="chains" value="D=8-108"/>
</dbReference>
<dbReference type="PDBsum" id="1AR1"/>
<dbReference type="PDBsum" id="1MQK"/>
<dbReference type="PDBsum" id="3EHB"/>
<dbReference type="PDBsum" id="3HB3"/>
<dbReference type="SMR" id="P01636"/>
<dbReference type="FunCoup" id="P01636">
    <property type="interactions" value="558"/>
</dbReference>
<dbReference type="IntAct" id="P01636">
    <property type="interactions" value="1"/>
</dbReference>
<dbReference type="CPTAC" id="non-CPTAC-3526"/>
<dbReference type="PeptideAtlas" id="P01636"/>
<dbReference type="InParanoid" id="P01636"/>
<dbReference type="EvolutionaryTrace" id="P01636"/>
<dbReference type="Proteomes" id="UP000000589">
    <property type="component" value="Unplaced"/>
</dbReference>
<dbReference type="RNAct" id="P01636">
    <property type="molecule type" value="protein"/>
</dbReference>
<dbReference type="GO" id="GO:0019814">
    <property type="term" value="C:immunoglobulin complex"/>
    <property type="evidence" value="ECO:0000318"/>
    <property type="project" value="GO_Central"/>
</dbReference>
<dbReference type="GO" id="GO:0002250">
    <property type="term" value="P:adaptive immune response"/>
    <property type="evidence" value="ECO:0007669"/>
    <property type="project" value="UniProtKB-KW"/>
</dbReference>
<dbReference type="GO" id="GO:0006955">
    <property type="term" value="P:immune response"/>
    <property type="evidence" value="ECO:0000318"/>
    <property type="project" value="GO_Central"/>
</dbReference>
<dbReference type="CDD" id="cd04980">
    <property type="entry name" value="IgV_L_kappa"/>
    <property type="match status" value="1"/>
</dbReference>
<dbReference type="FunFam" id="2.60.40.10:FF:000212">
    <property type="entry name" value="Immunoglobulin kappa chain variable 12-38"/>
    <property type="match status" value="1"/>
</dbReference>
<dbReference type="Gene3D" id="2.60.40.10">
    <property type="entry name" value="Immunoglobulins"/>
    <property type="match status" value="1"/>
</dbReference>
<dbReference type="InterPro" id="IPR007110">
    <property type="entry name" value="Ig-like_dom"/>
</dbReference>
<dbReference type="InterPro" id="IPR036179">
    <property type="entry name" value="Ig-like_dom_sf"/>
</dbReference>
<dbReference type="InterPro" id="IPR013783">
    <property type="entry name" value="Ig-like_fold"/>
</dbReference>
<dbReference type="InterPro" id="IPR003599">
    <property type="entry name" value="Ig_sub"/>
</dbReference>
<dbReference type="InterPro" id="IPR013106">
    <property type="entry name" value="Ig_V-set"/>
</dbReference>
<dbReference type="InterPro" id="IPR050150">
    <property type="entry name" value="IgV_Light_Chain"/>
</dbReference>
<dbReference type="PANTHER" id="PTHR23267">
    <property type="entry name" value="IMMUNOGLOBULIN LIGHT CHAIN"/>
    <property type="match status" value="1"/>
</dbReference>
<dbReference type="Pfam" id="PF07686">
    <property type="entry name" value="V-set"/>
    <property type="match status" value="1"/>
</dbReference>
<dbReference type="SMART" id="SM00409">
    <property type="entry name" value="IG"/>
    <property type="match status" value="1"/>
</dbReference>
<dbReference type="SMART" id="SM00406">
    <property type="entry name" value="IGv"/>
    <property type="match status" value="1"/>
</dbReference>
<dbReference type="SUPFAM" id="SSF48726">
    <property type="entry name" value="Immunoglobulin"/>
    <property type="match status" value="1"/>
</dbReference>
<dbReference type="PROSITE" id="PS50835">
    <property type="entry name" value="IG_LIKE"/>
    <property type="match status" value="1"/>
</dbReference>
<name>KV5A4_MOUSE</name>
<reference key="1">
    <citation type="journal article" date="1980" name="Mol. Immunol.">
        <title>Amino acid sequence of the variable region of M149 mouse myeloma light chain: comparison with the nucleotide sequence of K2 and K3 clones.</title>
        <authorList>
            <person name="Appella E."/>
            <person name="Alvarez V.L."/>
        </authorList>
    </citation>
    <scope>PROTEIN SEQUENCE</scope>
    <source>
        <strain>BALB/cJ</strain>
    </source>
</reference>
<evidence type="ECO:0000255" key="1">
    <source>
        <dbReference type="PROSITE-ProRule" id="PRU00114"/>
    </source>
</evidence>
<evidence type="ECO:0007829" key="2">
    <source>
        <dbReference type="PDB" id="1MQK"/>
    </source>
</evidence>